<keyword id="KW-0007">Acetylation</keyword>
<keyword id="KW-0051">Antiviral defense</keyword>
<keyword id="KW-0072">Autophagy</keyword>
<keyword id="KW-0175">Coiled coil</keyword>
<keyword id="KW-0963">Cytoplasm</keyword>
<keyword id="KW-0391">Immunity</keyword>
<keyword id="KW-0399">Innate immunity</keyword>
<keyword id="KW-0479">Metal-binding</keyword>
<keyword id="KW-0539">Nucleus</keyword>
<keyword id="KW-0597">Phosphoprotein</keyword>
<keyword id="KW-1185">Reference proteome</keyword>
<keyword id="KW-0808">Transferase</keyword>
<keyword id="KW-0832">Ubl conjugation</keyword>
<keyword id="KW-0833">Ubl conjugation pathway</keyword>
<keyword id="KW-0862">Zinc</keyword>
<keyword id="KW-0863">Zinc-finger</keyword>
<sequence>MASGILVNVKEEVTCPICLELLTQPLSLDCGHSFCQACLTANHEKSMLDKGESSCPVCRISYQPENIRPNRHVANIVEKLREVKLSPEGQKVDHCARHGEKLLLFCQEDGKVICWLCERSQEHRGHHTFLTEEVAQECQVKLQAALEMLRQKQQEAEELEADIREEKASWKTQIQYDKTNVLADFEQLRDILDWEESNELQNLEKEEEDILKRLTKSETEMVQQTQSVRELISDLEHRLQGSVMELLQGVDGVIKRMENVTLKKPETFPKNRRRVFRAPDLKGMLEVFRELTDVRRYWVDVTVAPNNISCAVISEDMRQVSSPKPQIIYGAQGTRYQTFMNFNYCTGILGSQSITSGKHYWEVDVSKKSAWILGVCAGFQPDATCNIEKNENYQPKYGYWVIGLEEGVKCSAFQDGSFHTPSAPFIVPLSVIICPDRVGVFLDYEACTVSFFNITNHGFLIYKFSHCSFSQPVFPYLNPRKCRVPMTLCSPSS</sequence>
<gene>
    <name type="primary">TRIM5</name>
</gene>
<name>TRIM5_GORGO</name>
<accession>Q5C8T6</accession>
<accession>Q0NNY0</accession>
<accession>Q3ZEE7</accession>
<accession>Q50EX0</accession>
<accession>Q5D7I7</accession>
<protein>
    <recommendedName>
        <fullName>Tripartite motif-containing protein 5</fullName>
        <ecNumber>2.3.2.27</ecNumber>
    </recommendedName>
    <alternativeName>
        <fullName evidence="8">RING-type E3 ubiquitin transferase TRIM5</fullName>
    </alternativeName>
    <alternativeName>
        <fullName>TRIM5alpha</fullName>
    </alternativeName>
</protein>
<comment type="function">
    <text evidence="3">Capsid-specific restriction factor that prevents infection from non-host-adapted retroviruses. Blocks viral replication early in the life cycle, after viral entry but before reverse transcription. In addition to acting as a capsid-specific restriction factor, also acts as a pattern recognition receptor that activates innate immune signaling in response to the retroviral capsid lattice. Binding to the viral capsid triggers its E3 ubiquitin ligase activity, and in concert with the heterodimeric ubiquitin conjugating enzyme complex UBE2V1-UBE2N (also known as UBC13-UEV1A complex) generates 'Lys-63'-linked polyubiquitin chains, which in turn are catalysts in the autophosphorylation of the MAP3K7/TAK1 complex (includes TAK1, TAB2, and TAB3). Activation of the MAP3K7/TAK1 complex by autophosphorylation results in the induction and expression of NF-kappa-B and MAPK-responsive inflammatory genes, thereby leading to an innate immune response in the infected cell. Plays a role in regulating autophagy through activation of autophagy regulator BECN1 by causing its dissociation from its inhibitors BCL2 and TAB2.</text>
</comment>
<comment type="catalytic activity">
    <reaction>
        <text>S-ubiquitinyl-[E2 ubiquitin-conjugating enzyme]-L-cysteine + [acceptor protein]-L-lysine = [E2 ubiquitin-conjugating enzyme]-L-cysteine + N(6)-ubiquitinyl-[acceptor protein]-L-lysine.</text>
        <dbReference type="EC" id="2.3.2.27"/>
    </reaction>
</comment>
<comment type="pathway">
    <text>Protein modification; protein ubiquitination.</text>
</comment>
<comment type="subunit">
    <text evidence="2 3">Can form homodimers and homotrimers. In addition to lower-order dimerization, also exhibits a higher-order multimerization and both low- and high-order multimerizations are essential for its restriction activity. Interacts with BTBD1 and BTBD2. Interacts with PSMC4, PSMC5, PSMD7 and HSPA8/HSC70. Interacts (via B30.2/SPRY domain) with HSPA1A/B. Interacts with PSMC2, MAP3K7/TAK1, TAB2 and TAB3. Interacts with SQSTM1. Interacts with TRIM6 and TRIM34. Interacts with ULK1 (phosphorylated form), GABARAP, GABARAPL1, GABARAPL2, MAP1LC3A, MAP1LC3C and BECN1.</text>
</comment>
<comment type="subcellular location">
    <subcellularLocation>
        <location evidence="2">Cytoplasm</location>
    </subcellularLocation>
    <subcellularLocation>
        <location evidence="2">Nucleus</location>
    </subcellularLocation>
    <text evidence="2">Predominantly localizes in cytoplasmic bodies. Localization may be influenced by the coexpression of other TRIM proteins, hence partial nuclear localization is observed in the presence of TRIM22 or TRIM27. In cytoplasmic bodies, colocalizes with proteasomal subunits and SQSTM1.</text>
</comment>
<comment type="domain">
    <text evidence="2 3">The B box-type zinc finger domain and the coiled-coil domain contribute to the higher and low order multimerization respectively which is essential for restriction activity. The coiled coil domain is important for higher order multimerization by promoting the initial dimerization.</text>
</comment>
<comment type="domain">
    <text evidence="1">The B30.2/SPRY domain acts as a capsid recognition domain. Polymorphisms in this domain explain the observed species-specific differences among orthologs (By similarity).</text>
</comment>
<comment type="domain">
    <text evidence="1">The RING-type zinc finger domain confers E3 ubiquitin ligase activity and is essential for retrovirus restriction activity, autoubiquitination and higher-order multimerization.</text>
</comment>
<comment type="PTM">
    <text evidence="1">Degraded in a proteasome-independent fashion in the absence of viral infection but in a proteasome-dependent fashion following exposure to restriction sensitive virus.</text>
</comment>
<comment type="PTM">
    <text evidence="1">Autoubiquitinated in a RING finger- and UBE2D2-dependent manner. Monoubiquitinated by TRIM21. Deubiquitinated by Yersinia YopJ. Ubiquitination may not lead to proteasomal degradation (By similarity).</text>
</comment>
<comment type="similarity">
    <text evidence="8">Belongs to the TRIM/RBCC family.</text>
</comment>
<evidence type="ECO:0000250" key="1"/>
<evidence type="ECO:0000250" key="2">
    <source>
        <dbReference type="UniProtKB" id="Q0PF16"/>
    </source>
</evidence>
<evidence type="ECO:0000250" key="3">
    <source>
        <dbReference type="UniProtKB" id="Q9C035"/>
    </source>
</evidence>
<evidence type="ECO:0000255" key="4"/>
<evidence type="ECO:0000255" key="5">
    <source>
        <dbReference type="PROSITE-ProRule" id="PRU00024"/>
    </source>
</evidence>
<evidence type="ECO:0000255" key="6">
    <source>
        <dbReference type="PROSITE-ProRule" id="PRU00175"/>
    </source>
</evidence>
<evidence type="ECO:0000255" key="7">
    <source>
        <dbReference type="PROSITE-ProRule" id="PRU00548"/>
    </source>
</evidence>
<evidence type="ECO:0000305" key="8"/>
<feature type="initiator methionine" description="Removed" evidence="3">
    <location>
        <position position="1"/>
    </location>
</feature>
<feature type="chain" id="PRO_0000273458" description="Tripartite motif-containing protein 5">
    <location>
        <begin position="2"/>
        <end position="493"/>
    </location>
</feature>
<feature type="domain" description="B30.2/SPRY" evidence="7">
    <location>
        <begin position="281"/>
        <end position="493"/>
    </location>
</feature>
<feature type="zinc finger region" description="RING-type" evidence="6">
    <location>
        <begin position="15"/>
        <end position="59"/>
    </location>
</feature>
<feature type="zinc finger region" description="B box-type" evidence="5">
    <location>
        <begin position="90"/>
        <end position="132"/>
    </location>
</feature>
<feature type="region of interest" description="Required for interaction with GABARAP and for autophagy" evidence="2">
    <location>
        <begin position="185"/>
        <end position="198"/>
    </location>
</feature>
<feature type="coiled-coil region" evidence="4">
    <location>
        <begin position="131"/>
        <end position="240"/>
    </location>
</feature>
<feature type="binding site" evidence="5">
    <location>
        <position position="95"/>
    </location>
    <ligand>
        <name>Zn(2+)</name>
        <dbReference type="ChEBI" id="CHEBI:29105"/>
    </ligand>
</feature>
<feature type="binding site" evidence="5">
    <location>
        <position position="98"/>
    </location>
    <ligand>
        <name>Zn(2+)</name>
        <dbReference type="ChEBI" id="CHEBI:29105"/>
    </ligand>
</feature>
<feature type="binding site" evidence="5">
    <location>
        <position position="117"/>
    </location>
    <ligand>
        <name>Zn(2+)</name>
        <dbReference type="ChEBI" id="CHEBI:29105"/>
    </ligand>
</feature>
<feature type="binding site" evidence="5">
    <location>
        <position position="123"/>
    </location>
    <ligand>
        <name>Zn(2+)</name>
        <dbReference type="ChEBI" id="CHEBI:29105"/>
    </ligand>
</feature>
<feature type="modified residue" description="N-acetylalanine" evidence="3">
    <location>
        <position position="2"/>
    </location>
</feature>
<feature type="modified residue" description="Phosphoserine" evidence="3">
    <location>
        <position position="86"/>
    </location>
</feature>
<feature type="sequence conflict" description="In Ref. 1; AAX86680, 3; ABC25561/AAV91981 and 4; AAY23160." evidence="8" ref="1 3 4">
    <original>E</original>
    <variation>K</variation>
    <location>
        <position position="44"/>
    </location>
</feature>
<feature type="sequence conflict" description="In Ref. 1; AAX86680, 3; ABC25561/AAV91981 and 4; AAY23160." evidence="8" ref="1 3 4">
    <original>C</original>
    <variation>Y</variation>
    <location>
        <position position="138"/>
    </location>
</feature>
<feature type="sequence conflict" description="In Ref. 4; AAY23160." evidence="8" ref="4">
    <original>H</original>
    <variation>R</variation>
    <location>
        <position position="237"/>
    </location>
</feature>
<feature type="sequence conflict" description="In Ref. 4; AAY23160." evidence="8" ref="4">
    <original>V</original>
    <variation>I</variation>
    <location>
        <position position="253"/>
    </location>
</feature>
<feature type="sequence conflict" description="In Ref. 4; AAY23160." evidence="8" ref="4">
    <original>R</original>
    <variation>K</variation>
    <location>
        <position position="483"/>
    </location>
</feature>
<dbReference type="EC" id="2.3.2.27"/>
<dbReference type="EMBL" id="AY899872">
    <property type="protein sequence ID" value="AAX86680.1"/>
    <property type="molecule type" value="Genomic_DNA"/>
</dbReference>
<dbReference type="EMBL" id="AY899866">
    <property type="protein sequence ID" value="AAX86680.1"/>
    <property type="status" value="JOINED"/>
    <property type="molecule type" value="Genomic_DNA"/>
</dbReference>
<dbReference type="EMBL" id="AY899867">
    <property type="protein sequence ID" value="AAX86680.1"/>
    <property type="status" value="JOINED"/>
    <property type="molecule type" value="Genomic_DNA"/>
</dbReference>
<dbReference type="EMBL" id="AY899868">
    <property type="protein sequence ID" value="AAX86680.1"/>
    <property type="status" value="JOINED"/>
    <property type="molecule type" value="Genomic_DNA"/>
</dbReference>
<dbReference type="EMBL" id="AY899869">
    <property type="protein sequence ID" value="AAX86680.1"/>
    <property type="status" value="JOINED"/>
    <property type="molecule type" value="Genomic_DNA"/>
</dbReference>
<dbReference type="EMBL" id="AY899870">
    <property type="protein sequence ID" value="AAX86680.1"/>
    <property type="status" value="JOINED"/>
    <property type="molecule type" value="Genomic_DNA"/>
</dbReference>
<dbReference type="EMBL" id="AY899871">
    <property type="protein sequence ID" value="AAX86680.1"/>
    <property type="status" value="JOINED"/>
    <property type="molecule type" value="Genomic_DNA"/>
</dbReference>
<dbReference type="EMBL" id="AY710300">
    <property type="protein sequence ID" value="AAW55819.1"/>
    <property type="molecule type" value="Genomic_DNA"/>
</dbReference>
<dbReference type="EMBL" id="AY740620">
    <property type="protein sequence ID" value="AAW72448.1"/>
    <property type="molecule type" value="mRNA"/>
</dbReference>
<dbReference type="EMBL" id="DQ298178">
    <property type="protein sequence ID" value="ABC25561.1"/>
    <property type="molecule type" value="Genomic_DNA"/>
</dbReference>
<dbReference type="EMBL" id="AY843510">
    <property type="protein sequence ID" value="AAV91981.1"/>
    <property type="molecule type" value="Genomic_DNA"/>
</dbReference>
<dbReference type="EMBL" id="AY923178">
    <property type="protein sequence ID" value="AAY23160.2"/>
    <property type="molecule type" value="Genomic_DNA"/>
</dbReference>
<dbReference type="EMBL" id="DQ437600">
    <property type="protein sequence ID" value="ABE28402.1"/>
    <property type="molecule type" value="Genomic_DNA"/>
</dbReference>
<dbReference type="RefSeq" id="NP_001266478.1">
    <property type="nucleotide sequence ID" value="NM_001279549.1"/>
</dbReference>
<dbReference type="BMRB" id="Q5C8T6"/>
<dbReference type="SMR" id="Q5C8T6"/>
<dbReference type="FunCoup" id="Q5C8T6">
    <property type="interactions" value="196"/>
</dbReference>
<dbReference type="STRING" id="9593.ENSGGOP00000022424"/>
<dbReference type="GeneID" id="101133340"/>
<dbReference type="CTD" id="85363"/>
<dbReference type="eggNOG" id="KOG2177">
    <property type="taxonomic scope" value="Eukaryota"/>
</dbReference>
<dbReference type="InParanoid" id="Q5C8T6"/>
<dbReference type="UniPathway" id="UPA00143"/>
<dbReference type="Proteomes" id="UP000001519">
    <property type="component" value="Unplaced"/>
</dbReference>
<dbReference type="GO" id="GO:0005737">
    <property type="term" value="C:cytoplasm"/>
    <property type="evidence" value="ECO:0000318"/>
    <property type="project" value="GO_Central"/>
</dbReference>
<dbReference type="GO" id="GO:0005634">
    <property type="term" value="C:nucleus"/>
    <property type="evidence" value="ECO:0007669"/>
    <property type="project" value="UniProtKB-SubCell"/>
</dbReference>
<dbReference type="GO" id="GO:0000932">
    <property type="term" value="C:P-body"/>
    <property type="evidence" value="ECO:0000250"/>
    <property type="project" value="UniProtKB"/>
</dbReference>
<dbReference type="GO" id="GO:0038187">
    <property type="term" value="F:pattern recognition receptor activity"/>
    <property type="evidence" value="ECO:0000250"/>
    <property type="project" value="UniProtKB"/>
</dbReference>
<dbReference type="GO" id="GO:0042803">
    <property type="term" value="F:protein homodimerization activity"/>
    <property type="evidence" value="ECO:0000318"/>
    <property type="project" value="GO_Central"/>
</dbReference>
<dbReference type="GO" id="GO:0019901">
    <property type="term" value="F:protein kinase binding"/>
    <property type="evidence" value="ECO:0000318"/>
    <property type="project" value="GO_Central"/>
</dbReference>
<dbReference type="GO" id="GO:0061630">
    <property type="term" value="F:ubiquitin protein ligase activity"/>
    <property type="evidence" value="ECO:0000318"/>
    <property type="project" value="GO_Central"/>
</dbReference>
<dbReference type="GO" id="GO:0004842">
    <property type="term" value="F:ubiquitin-protein transferase activity"/>
    <property type="evidence" value="ECO:0000250"/>
    <property type="project" value="UniProtKB"/>
</dbReference>
<dbReference type="GO" id="GO:0008270">
    <property type="term" value="F:zinc ion binding"/>
    <property type="evidence" value="ECO:0007669"/>
    <property type="project" value="UniProtKB-KW"/>
</dbReference>
<dbReference type="GO" id="GO:0002218">
    <property type="term" value="P:activation of innate immune response"/>
    <property type="evidence" value="ECO:0000250"/>
    <property type="project" value="UniProtKB"/>
</dbReference>
<dbReference type="GO" id="GO:0006914">
    <property type="term" value="P:autophagy"/>
    <property type="evidence" value="ECO:0007669"/>
    <property type="project" value="UniProtKB-KW"/>
</dbReference>
<dbReference type="GO" id="GO:0051607">
    <property type="term" value="P:defense response to virus"/>
    <property type="evidence" value="ECO:0007669"/>
    <property type="project" value="UniProtKB-KW"/>
</dbReference>
<dbReference type="GO" id="GO:0045087">
    <property type="term" value="P:innate immune response"/>
    <property type="evidence" value="ECO:0000318"/>
    <property type="project" value="GO_Central"/>
</dbReference>
<dbReference type="GO" id="GO:0043123">
    <property type="term" value="P:positive regulation of canonical NF-kappaB signal transduction"/>
    <property type="evidence" value="ECO:0000250"/>
    <property type="project" value="UniProtKB"/>
</dbReference>
<dbReference type="GO" id="GO:0043410">
    <property type="term" value="P:positive regulation of MAPK cascade"/>
    <property type="evidence" value="ECO:0000250"/>
    <property type="project" value="UniProtKB"/>
</dbReference>
<dbReference type="GO" id="GO:0051092">
    <property type="term" value="P:positive regulation of NF-kappaB transcription factor activity"/>
    <property type="evidence" value="ECO:0000250"/>
    <property type="project" value="UniProtKB"/>
</dbReference>
<dbReference type="GO" id="GO:0070534">
    <property type="term" value="P:protein K63-linked ubiquitination"/>
    <property type="evidence" value="ECO:0000250"/>
    <property type="project" value="UniProtKB"/>
</dbReference>
<dbReference type="GO" id="GO:0010468">
    <property type="term" value="P:regulation of gene expression"/>
    <property type="evidence" value="ECO:0000318"/>
    <property type="project" value="GO_Central"/>
</dbReference>
<dbReference type="GO" id="GO:0031664">
    <property type="term" value="P:regulation of lipopolysaccharide-mediated signaling pathway"/>
    <property type="evidence" value="ECO:0000250"/>
    <property type="project" value="UniProtKB"/>
</dbReference>
<dbReference type="GO" id="GO:0032880">
    <property type="term" value="P:regulation of protein localization"/>
    <property type="evidence" value="ECO:0000318"/>
    <property type="project" value="GO_Central"/>
</dbReference>
<dbReference type="GO" id="GO:0046596">
    <property type="term" value="P:regulation of viral entry into host cell"/>
    <property type="evidence" value="ECO:0000318"/>
    <property type="project" value="GO_Central"/>
</dbReference>
<dbReference type="CDD" id="cd19761">
    <property type="entry name" value="Bbox2_TRIM5-like"/>
    <property type="match status" value="1"/>
</dbReference>
<dbReference type="CDD" id="cd16591">
    <property type="entry name" value="RING-HC_TRIM5-like_C-IV"/>
    <property type="match status" value="1"/>
</dbReference>
<dbReference type="CDD" id="cd15822">
    <property type="entry name" value="SPRY_PRY_TRIM5"/>
    <property type="match status" value="1"/>
</dbReference>
<dbReference type="FunFam" id="2.60.120.920:FF:000023">
    <property type="entry name" value="Tripartite motif-containing 5 (Predicted)"/>
    <property type="match status" value="1"/>
</dbReference>
<dbReference type="FunFam" id="3.30.160.60:FF:000386">
    <property type="entry name" value="Tripartite motif-containing 5 (Predicted)"/>
    <property type="match status" value="1"/>
</dbReference>
<dbReference type="FunFam" id="3.30.40.10:FF:000144">
    <property type="entry name" value="Tripartite motif-containing 5 (Predicted)"/>
    <property type="match status" value="1"/>
</dbReference>
<dbReference type="Gene3D" id="2.60.120.920">
    <property type="match status" value="1"/>
</dbReference>
<dbReference type="Gene3D" id="3.30.160.60">
    <property type="entry name" value="Classic Zinc Finger"/>
    <property type="match status" value="1"/>
</dbReference>
<dbReference type="Gene3D" id="3.30.40.10">
    <property type="entry name" value="Zinc/RING finger domain, C3HC4 (zinc finger)"/>
    <property type="match status" value="1"/>
</dbReference>
<dbReference type="InterPro" id="IPR001870">
    <property type="entry name" value="B30.2/SPRY"/>
</dbReference>
<dbReference type="InterPro" id="IPR043136">
    <property type="entry name" value="B30.2/SPRY_sf"/>
</dbReference>
<dbReference type="InterPro" id="IPR003879">
    <property type="entry name" value="Butyrophylin_SPRY"/>
</dbReference>
<dbReference type="InterPro" id="IPR013320">
    <property type="entry name" value="ConA-like_dom_sf"/>
</dbReference>
<dbReference type="InterPro" id="IPR003877">
    <property type="entry name" value="SPRY_dom"/>
</dbReference>
<dbReference type="InterPro" id="IPR050143">
    <property type="entry name" value="TRIM/RBCC"/>
</dbReference>
<dbReference type="InterPro" id="IPR027370">
    <property type="entry name" value="Znf-RING_euk"/>
</dbReference>
<dbReference type="InterPro" id="IPR000315">
    <property type="entry name" value="Znf_B-box"/>
</dbReference>
<dbReference type="InterPro" id="IPR001841">
    <property type="entry name" value="Znf_RING"/>
</dbReference>
<dbReference type="InterPro" id="IPR013083">
    <property type="entry name" value="Znf_RING/FYVE/PHD"/>
</dbReference>
<dbReference type="InterPro" id="IPR017907">
    <property type="entry name" value="Znf_RING_CS"/>
</dbReference>
<dbReference type="PANTHER" id="PTHR24103">
    <property type="entry name" value="E3 UBIQUITIN-PROTEIN LIGASE TRIM"/>
    <property type="match status" value="1"/>
</dbReference>
<dbReference type="Pfam" id="PF00622">
    <property type="entry name" value="SPRY"/>
    <property type="match status" value="1"/>
</dbReference>
<dbReference type="Pfam" id="PF00643">
    <property type="entry name" value="zf-B_box"/>
    <property type="match status" value="1"/>
</dbReference>
<dbReference type="Pfam" id="PF13445">
    <property type="entry name" value="zf-RING_UBOX"/>
    <property type="match status" value="1"/>
</dbReference>
<dbReference type="PRINTS" id="PR01407">
    <property type="entry name" value="BUTYPHLNCDUF"/>
</dbReference>
<dbReference type="SMART" id="SM00336">
    <property type="entry name" value="BBOX"/>
    <property type="match status" value="1"/>
</dbReference>
<dbReference type="SMART" id="SM00184">
    <property type="entry name" value="RING"/>
    <property type="match status" value="1"/>
</dbReference>
<dbReference type="SMART" id="SM00449">
    <property type="entry name" value="SPRY"/>
    <property type="match status" value="1"/>
</dbReference>
<dbReference type="SUPFAM" id="SSF57845">
    <property type="entry name" value="B-box zinc-binding domain"/>
    <property type="match status" value="1"/>
</dbReference>
<dbReference type="SUPFAM" id="SSF49899">
    <property type="entry name" value="Concanavalin A-like lectins/glucanases"/>
    <property type="match status" value="1"/>
</dbReference>
<dbReference type="SUPFAM" id="SSF57850">
    <property type="entry name" value="RING/U-box"/>
    <property type="match status" value="1"/>
</dbReference>
<dbReference type="PROSITE" id="PS50188">
    <property type="entry name" value="B302_SPRY"/>
    <property type="match status" value="1"/>
</dbReference>
<dbReference type="PROSITE" id="PS50119">
    <property type="entry name" value="ZF_BBOX"/>
    <property type="match status" value="1"/>
</dbReference>
<dbReference type="PROSITE" id="PS00518">
    <property type="entry name" value="ZF_RING_1"/>
    <property type="match status" value="1"/>
</dbReference>
<dbReference type="PROSITE" id="PS50089">
    <property type="entry name" value="ZF_RING_2"/>
    <property type="match status" value="1"/>
</dbReference>
<reference key="1">
    <citation type="journal article" date="2005" name="Gene">
        <title>Adaptive evolution of primate TRIM5alpha, a gene restricting HIV-1 infection.</title>
        <authorList>
            <person name="Liu H.L."/>
            <person name="Wang Y.Q."/>
            <person name="Liao C.H."/>
            <person name="Kuang Y.Q."/>
            <person name="Zheng Y.T."/>
            <person name="Su B."/>
        </authorList>
    </citation>
    <scope>NUCLEOTIDE SEQUENCE [GENOMIC DNA]</scope>
</reference>
<reference key="2">
    <citation type="journal article" date="2005" name="J. Virol.">
        <title>The B30.2(SPRY) domain of the retroviral restriction factor TRIM5alpha exhibits lineage-specific length and sequence variation in primates.</title>
        <authorList>
            <person name="Song B."/>
            <person name="Gold B."/>
            <person name="O'Huigin C."/>
            <person name="Javanbakht H."/>
            <person name="Li X."/>
            <person name="Stremlau M."/>
            <person name="Winkler C."/>
            <person name="Dean M."/>
            <person name="Sodroski J."/>
        </authorList>
    </citation>
    <scope>NUCLEOTIDE SEQUENCE [MRNA]</scope>
</reference>
<reference key="3">
    <citation type="journal article" date="2006" name="Curr. Biol.">
        <title>High-frequency persistence of an impaired allele of the retroviral defense gene TRIM5alpha in humans.</title>
        <authorList>
            <person name="Sawyer S.L."/>
            <person name="Wu L.I."/>
            <person name="Akey J.M."/>
            <person name="Emerman M."/>
            <person name="Malik H.S."/>
        </authorList>
    </citation>
    <scope>NUCLEOTIDE SEQUENCE [GENOMIC DNA]</scope>
    <source>
        <strain>AG05251</strain>
    </source>
</reference>
<reference key="4">
    <citation type="journal article" date="2006" name="Retrovirology">
        <title>Patterns of evolution of host proteins involved in retroviral pathogenesis.</title>
        <authorList>
            <person name="Ortiz M."/>
            <person name="Bleiber G."/>
            <person name="Martinez R."/>
            <person name="Kaessmann H."/>
            <person name="Telenti A."/>
        </authorList>
    </citation>
    <scope>NUCLEOTIDE SEQUENCE [GENOMIC DNA]</scope>
</reference>
<reference key="5">
    <citation type="submission" date="2005-02" db="EMBL/GenBank/DDBJ databases">
        <authorList>
            <person name="Ortiz M."/>
            <person name="Bleiber G."/>
            <person name="Martinez R."/>
            <person name="Telenti A."/>
        </authorList>
    </citation>
    <scope>SEQUENCE REVISION TO 384-385; 289; 396 AND 420</scope>
</reference>
<reference key="6">
    <citation type="journal article" date="2006" name="J. Virol.">
        <title>All three variable regions of the TRIM5alpha B30.2 domain can contribute to the specificity of retrovirus restriction.</title>
        <authorList>
            <person name="Ohkura S."/>
            <person name="Yap M.W."/>
            <person name="Sheldon T."/>
            <person name="Stoye J.P."/>
        </authorList>
    </citation>
    <scope>NUCLEOTIDE SEQUENCE [GENOMIC DNA] OF 300-493</scope>
</reference>
<organism>
    <name type="scientific">Gorilla gorilla gorilla</name>
    <name type="common">Western lowland gorilla</name>
    <dbReference type="NCBI Taxonomy" id="9595"/>
    <lineage>
        <taxon>Eukaryota</taxon>
        <taxon>Metazoa</taxon>
        <taxon>Chordata</taxon>
        <taxon>Craniata</taxon>
        <taxon>Vertebrata</taxon>
        <taxon>Euteleostomi</taxon>
        <taxon>Mammalia</taxon>
        <taxon>Eutheria</taxon>
        <taxon>Euarchontoglires</taxon>
        <taxon>Primates</taxon>
        <taxon>Haplorrhini</taxon>
        <taxon>Catarrhini</taxon>
        <taxon>Hominidae</taxon>
        <taxon>Gorilla</taxon>
    </lineage>
</organism>
<proteinExistence type="evidence at transcript level"/>